<name>CMC4_MOUSE</name>
<protein>
    <recommendedName>
        <fullName>Cx9C motif-containing protein 4</fullName>
    </recommendedName>
    <alternativeName>
        <fullName>Mature T-cell proliferation 1 neighbor protein</fullName>
    </alternativeName>
    <alternativeName>
        <fullName>Mature T-cell proliferation-1 type A</fullName>
        <shortName>MTCP-1 type A</shortName>
    </alternativeName>
    <alternativeName>
        <fullName>Protein p8 MTCP-1</fullName>
        <shortName>p8MTCP1</shortName>
    </alternativeName>
</protein>
<keyword id="KW-0025">Alternative splicing</keyword>
<keyword id="KW-1015">Disulfide bond</keyword>
<keyword id="KW-0496">Mitochondrion</keyword>
<keyword id="KW-1185">Reference proteome</keyword>
<evidence type="ECO:0000250" key="1"/>
<evidence type="ECO:0000255" key="2">
    <source>
        <dbReference type="PROSITE-ProRule" id="PRU01150"/>
    </source>
</evidence>
<evidence type="ECO:0000269" key="3">
    <source>
    </source>
</evidence>
<evidence type="ECO:0000305" key="4"/>
<sequence>MPQKDPCQKQACEIQKCLQANNYLESKCQAVIQELRKCCARYPKGRSLVCSGFEKEEEEKLAMKSGSK</sequence>
<proteinExistence type="evidence at transcript level"/>
<comment type="subcellular location">
    <subcellularLocation>
        <location evidence="3">Mitochondrion</location>
    </subcellularLocation>
</comment>
<comment type="alternative products">
    <event type="alternative splicing"/>
    <isoform>
        <id>Q61908-1</id>
        <name>1</name>
        <name>Short</name>
        <name>Type A</name>
        <name>p8 MTCP-1</name>
        <sequence type="displayed"/>
    </isoform>
    <isoform>
        <id>Q60945-1</id>
        <name>2</name>
        <name>Long</name>
        <name>Type B1</name>
        <name>p13 MTCP-1</name>
        <sequence type="external"/>
    </isoform>
</comment>
<comment type="tissue specificity">
    <text>Expressed in many tissues.</text>
</comment>
<comment type="domain">
    <text evidence="1">The twin Cx9C motifs are involved in the recognition by the mitochondrial disulfide relay system.</text>
</comment>
<comment type="miscellaneous">
    <molecule>Isoform 1</molecule>
    <text>Shares a non-coding 5' exon with isoform 2 which is spliced to a different set of 3' exons encoding an unrelated protein.</text>
</comment>
<comment type="similarity">
    <text evidence="4">Belongs to the CMC4 family.</text>
</comment>
<feature type="chain" id="PRO_0000096615" description="Cx9C motif-containing protein 4">
    <location>
        <begin position="1"/>
        <end position="68"/>
    </location>
</feature>
<feature type="domain" description="CHCH" evidence="2">
    <location>
        <begin position="4"/>
        <end position="46"/>
    </location>
</feature>
<feature type="short sequence motif" description="Cx9C motif 1" evidence="2">
    <location>
        <begin position="7"/>
        <end position="17"/>
    </location>
</feature>
<feature type="short sequence motif" description="Cx9C motif 2" evidence="2">
    <location>
        <begin position="28"/>
        <end position="38"/>
    </location>
</feature>
<feature type="disulfide bond" evidence="2">
    <location>
        <begin position="7"/>
        <end position="38"/>
    </location>
</feature>
<feature type="disulfide bond" evidence="2">
    <location>
        <begin position="17"/>
        <end position="28"/>
    </location>
</feature>
<feature type="disulfide bond" evidence="1">
    <location>
        <begin position="39"/>
        <end position="50"/>
    </location>
</feature>
<organism>
    <name type="scientific">Mus musculus</name>
    <name type="common">Mouse</name>
    <dbReference type="NCBI Taxonomy" id="10090"/>
    <lineage>
        <taxon>Eukaryota</taxon>
        <taxon>Metazoa</taxon>
        <taxon>Chordata</taxon>
        <taxon>Craniata</taxon>
        <taxon>Vertebrata</taxon>
        <taxon>Euteleostomi</taxon>
        <taxon>Mammalia</taxon>
        <taxon>Eutheria</taxon>
        <taxon>Euarchontoglires</taxon>
        <taxon>Glires</taxon>
        <taxon>Rodentia</taxon>
        <taxon>Myomorpha</taxon>
        <taxon>Muroidea</taxon>
        <taxon>Muridae</taxon>
        <taxon>Murinae</taxon>
        <taxon>Mus</taxon>
        <taxon>Mus</taxon>
    </lineage>
</organism>
<dbReference type="EMBL" id="Z35294">
    <property type="protein sequence ID" value="CAA84544.1"/>
    <property type="molecule type" value="mRNA"/>
</dbReference>
<dbReference type="CCDS" id="CCDS41030.1">
    <molecule id="Q61908-1"/>
</dbReference>
<dbReference type="PIR" id="I48672">
    <property type="entry name" value="I48672"/>
</dbReference>
<dbReference type="RefSeq" id="NP_001281206.1">
    <molecule id="Q61908-1"/>
    <property type="nucleotide sequence ID" value="NM_001294277.1"/>
</dbReference>
<dbReference type="RefSeq" id="NP_034969.1">
    <molecule id="Q61908-1"/>
    <property type="nucleotide sequence ID" value="NM_010839.6"/>
</dbReference>
<dbReference type="SMR" id="Q61908"/>
<dbReference type="FunCoup" id="Q61908">
    <property type="interactions" value="401"/>
</dbReference>
<dbReference type="STRING" id="10090.ENSMUSP00000033543"/>
<dbReference type="PhosphoSitePlus" id="Q61908"/>
<dbReference type="PaxDb" id="10090-ENSMUSP00000033543"/>
<dbReference type="ProteomicsDB" id="283315">
    <molecule id="Q61908-1"/>
</dbReference>
<dbReference type="Pumba" id="Q61908"/>
<dbReference type="Antibodypedia" id="45442">
    <property type="antibodies" value="64 antibodies from 17 providers"/>
</dbReference>
<dbReference type="Ensembl" id="ENSMUST00000033543.14">
    <molecule id="Q61908-1"/>
    <property type="protein sequence ID" value="ENSMUSP00000033543.8"/>
    <property type="gene ID" value="ENSMUSG00000090110.9"/>
</dbReference>
<dbReference type="Ensembl" id="ENSMUST00000120286.2">
    <molecule id="Q61908-1"/>
    <property type="protein sequence ID" value="ENSMUSP00000112753.2"/>
    <property type="gene ID" value="ENSMUSG00000090110.9"/>
</dbReference>
<dbReference type="Ensembl" id="ENSMUST00000149863.3">
    <molecule id="Q61908-1"/>
    <property type="protein sequence ID" value="ENSMUSP00000117381.3"/>
    <property type="gene ID" value="ENSMUSG00000090110.9"/>
</dbReference>
<dbReference type="GeneID" id="105886298"/>
<dbReference type="KEGG" id="mmu:105886298"/>
<dbReference type="UCSC" id="uc009tpv.2">
    <molecule id="Q61908-1"/>
    <property type="organism name" value="mouse"/>
</dbReference>
<dbReference type="AGR" id="MGI:5637812"/>
<dbReference type="CTD" id="100272147"/>
<dbReference type="MGI" id="MGI:5637812">
    <property type="gene designation" value="Cmc4"/>
</dbReference>
<dbReference type="VEuPathDB" id="HostDB:ENSMUSG00000090110"/>
<dbReference type="eggNOG" id="ENOG502SC73">
    <property type="taxonomic scope" value="Eukaryota"/>
</dbReference>
<dbReference type="GeneTree" id="ENSGT00390000012647"/>
<dbReference type="HOGENOM" id="CLU_177210_1_1_1"/>
<dbReference type="InParanoid" id="Q61908"/>
<dbReference type="OMA" id="QANKYME"/>
<dbReference type="OrthoDB" id="13601at2759"/>
<dbReference type="PhylomeDB" id="Q61908"/>
<dbReference type="TreeFam" id="TF353119"/>
<dbReference type="BioGRID-ORCS" id="105886298">
    <property type="hits" value="0 hits in 33 CRISPR screens"/>
</dbReference>
<dbReference type="ChiTaRS" id="Cmc4">
    <property type="organism name" value="mouse"/>
</dbReference>
<dbReference type="PRO" id="PR:Q61908"/>
<dbReference type="Proteomes" id="UP000000589">
    <property type="component" value="Chromosome X"/>
</dbReference>
<dbReference type="RNAct" id="Q61908">
    <property type="molecule type" value="protein"/>
</dbReference>
<dbReference type="Bgee" id="ENSMUSG00000090110">
    <property type="expression patterns" value="Expressed in primary oocyte and 254 other cell types or tissues"/>
</dbReference>
<dbReference type="ExpressionAtlas" id="Q61908">
    <property type="expression patterns" value="baseline and differential"/>
</dbReference>
<dbReference type="GO" id="GO:0005739">
    <property type="term" value="C:mitochondrion"/>
    <property type="evidence" value="ECO:0007669"/>
    <property type="project" value="UniProtKB-SubCell"/>
</dbReference>
<dbReference type="FunFam" id="1.10.287.1130:FF:000002">
    <property type="entry name" value="cx9C motif-containing protein 4 isoform X2"/>
    <property type="match status" value="1"/>
</dbReference>
<dbReference type="Gene3D" id="1.10.287.1130">
    <property type="entry name" value="CytochromE C oxidase copper chaperone"/>
    <property type="match status" value="1"/>
</dbReference>
<dbReference type="InterPro" id="IPR027179">
    <property type="entry name" value="CMC4"/>
</dbReference>
<dbReference type="InterPro" id="IPR009069">
    <property type="entry name" value="Cys_alpha_HP_mot_SF"/>
</dbReference>
<dbReference type="PANTHER" id="PTHR15590">
    <property type="entry name" value="CX9C MOTIF-CONTAINING PROTEIN 4"/>
    <property type="match status" value="1"/>
</dbReference>
<dbReference type="PANTHER" id="PTHR15590:SF0">
    <property type="entry name" value="CX9C MOTIF-CONTAINING PROTEIN 4"/>
    <property type="match status" value="1"/>
</dbReference>
<dbReference type="Pfam" id="PF08991">
    <property type="entry name" value="CMC4"/>
    <property type="match status" value="1"/>
</dbReference>
<dbReference type="SUPFAM" id="SSF47072">
    <property type="entry name" value="Cysteine alpha-hairpin motif"/>
    <property type="match status" value="1"/>
</dbReference>
<dbReference type="PROSITE" id="PS51808">
    <property type="entry name" value="CHCH"/>
    <property type="match status" value="1"/>
</dbReference>
<reference key="1">
    <citation type="journal article" date="1994" name="Oncogene">
        <title>The MTCP-1/c6.1B gene encodes for a cytoplasmic 8 kD protein overexpressed in T cell leukemia bearing a t(X;14) translocation.</title>
        <authorList>
            <person name="Soulier J."/>
            <person name="Madani A."/>
            <person name="Cacheux V."/>
            <person name="Rosenzwajg M."/>
            <person name="Sigaux F."/>
            <person name="Stern M.-H."/>
        </authorList>
    </citation>
    <scope>NUCLEOTIDE SEQUENCE [MRNA] (ISOFORM 1)</scope>
</reference>
<reference key="2">
    <citation type="journal article" date="1995" name="Oncogene">
        <title>The 8 kD product of the putative oncogene MTCP-1 is a mitochondrial protein.</title>
        <authorList>
            <person name="Madani A."/>
            <person name="Soulier J."/>
            <person name="Schmid M."/>
            <person name="Plichtova R."/>
            <person name="Lerme F."/>
            <person name="Gateau-Roesch O."/>
            <person name="Garnier J.-P."/>
            <person name="Pla M."/>
            <person name="Sigaux F."/>
            <person name="Stern M.-H."/>
        </authorList>
    </citation>
    <scope>SUBCELLULAR LOCATION</scope>
</reference>
<gene>
    <name type="primary">Cmc4</name>
    <name type="synonym">C6.1b</name>
    <name type="synonym">Mtcp1</name>
</gene>
<accession>Q61908</accession>